<proteinExistence type="inferred from homology"/>
<accession>B3EIP1</accession>
<keyword id="KW-0378">Hydrolase</keyword>
<keyword id="KW-0460">Magnesium</keyword>
<keyword id="KW-0479">Metal-binding</keyword>
<keyword id="KW-0546">Nucleotide metabolism</keyword>
<protein>
    <recommendedName>
        <fullName evidence="1">Deoxyuridine 5'-triphosphate nucleotidohydrolase</fullName>
        <shortName evidence="1">dUTPase</shortName>
        <ecNumber evidence="1">3.6.1.23</ecNumber>
    </recommendedName>
    <alternativeName>
        <fullName evidence="1">dUTP pyrophosphatase</fullName>
    </alternativeName>
</protein>
<comment type="function">
    <text evidence="1">This enzyme is involved in nucleotide metabolism: it produces dUMP, the immediate precursor of thymidine nucleotides and it decreases the intracellular concentration of dUTP so that uracil cannot be incorporated into DNA.</text>
</comment>
<comment type="catalytic activity">
    <reaction evidence="1">
        <text>dUTP + H2O = dUMP + diphosphate + H(+)</text>
        <dbReference type="Rhea" id="RHEA:10248"/>
        <dbReference type="ChEBI" id="CHEBI:15377"/>
        <dbReference type="ChEBI" id="CHEBI:15378"/>
        <dbReference type="ChEBI" id="CHEBI:33019"/>
        <dbReference type="ChEBI" id="CHEBI:61555"/>
        <dbReference type="ChEBI" id="CHEBI:246422"/>
        <dbReference type="EC" id="3.6.1.23"/>
    </reaction>
</comment>
<comment type="cofactor">
    <cofactor evidence="1">
        <name>Mg(2+)</name>
        <dbReference type="ChEBI" id="CHEBI:18420"/>
    </cofactor>
</comment>
<comment type="pathway">
    <text evidence="1">Pyrimidine metabolism; dUMP biosynthesis; dUMP from dCTP (dUTP route): step 2/2.</text>
</comment>
<comment type="similarity">
    <text evidence="1">Belongs to the dUTPase family.</text>
</comment>
<organism>
    <name type="scientific">Chlorobium limicola (strain DSM 245 / NBRC 103803 / 6330)</name>
    <dbReference type="NCBI Taxonomy" id="290315"/>
    <lineage>
        <taxon>Bacteria</taxon>
        <taxon>Pseudomonadati</taxon>
        <taxon>Chlorobiota</taxon>
        <taxon>Chlorobiia</taxon>
        <taxon>Chlorobiales</taxon>
        <taxon>Chlorobiaceae</taxon>
        <taxon>Chlorobium/Pelodictyon group</taxon>
        <taxon>Chlorobium</taxon>
    </lineage>
</organism>
<gene>
    <name evidence="1" type="primary">dut</name>
    <name type="ordered locus">Clim_0903</name>
</gene>
<reference key="1">
    <citation type="submission" date="2008-05" db="EMBL/GenBank/DDBJ databases">
        <title>Complete sequence of Chlorobium limicola DSM 245.</title>
        <authorList>
            <consortium name="US DOE Joint Genome Institute"/>
            <person name="Lucas S."/>
            <person name="Copeland A."/>
            <person name="Lapidus A."/>
            <person name="Glavina del Rio T."/>
            <person name="Dalin E."/>
            <person name="Tice H."/>
            <person name="Bruce D."/>
            <person name="Goodwin L."/>
            <person name="Pitluck S."/>
            <person name="Schmutz J."/>
            <person name="Larimer F."/>
            <person name="Land M."/>
            <person name="Hauser L."/>
            <person name="Kyrpides N."/>
            <person name="Ovchinnikova G."/>
            <person name="Zhao F."/>
            <person name="Li T."/>
            <person name="Liu Z."/>
            <person name="Overmann J."/>
            <person name="Bryant D.A."/>
            <person name="Richardson P."/>
        </authorList>
    </citation>
    <scope>NUCLEOTIDE SEQUENCE [LARGE SCALE GENOMIC DNA]</scope>
    <source>
        <strain>DSM 245 / NBRC 103803 / 6330</strain>
    </source>
</reference>
<feature type="chain" id="PRO_1000094950" description="Deoxyuridine 5'-triphosphate nucleotidohydrolase">
    <location>
        <begin position="1"/>
        <end position="153"/>
    </location>
</feature>
<feature type="region of interest" description="Disordered" evidence="2">
    <location>
        <begin position="132"/>
        <end position="153"/>
    </location>
</feature>
<feature type="binding site" evidence="1">
    <location>
        <begin position="65"/>
        <end position="67"/>
    </location>
    <ligand>
        <name>substrate</name>
    </ligand>
</feature>
<feature type="binding site" evidence="1">
    <location>
        <position position="78"/>
    </location>
    <ligand>
        <name>substrate</name>
    </ligand>
</feature>
<feature type="binding site" evidence="1">
    <location>
        <begin position="82"/>
        <end position="84"/>
    </location>
    <ligand>
        <name>substrate</name>
    </ligand>
</feature>
<evidence type="ECO:0000255" key="1">
    <source>
        <dbReference type="HAMAP-Rule" id="MF_00116"/>
    </source>
</evidence>
<evidence type="ECO:0000256" key="2">
    <source>
        <dbReference type="SAM" id="MobiDB-lite"/>
    </source>
</evidence>
<dbReference type="EC" id="3.6.1.23" evidence="1"/>
<dbReference type="EMBL" id="CP001097">
    <property type="protein sequence ID" value="ACD89982.1"/>
    <property type="molecule type" value="Genomic_DNA"/>
</dbReference>
<dbReference type="RefSeq" id="WP_012465861.1">
    <property type="nucleotide sequence ID" value="NC_010803.1"/>
</dbReference>
<dbReference type="SMR" id="B3EIP1"/>
<dbReference type="STRING" id="290315.Clim_0903"/>
<dbReference type="KEGG" id="cli:Clim_0903"/>
<dbReference type="eggNOG" id="COG0756">
    <property type="taxonomic scope" value="Bacteria"/>
</dbReference>
<dbReference type="HOGENOM" id="CLU_068508_1_0_10"/>
<dbReference type="OrthoDB" id="9809956at2"/>
<dbReference type="UniPathway" id="UPA00610">
    <property type="reaction ID" value="UER00666"/>
</dbReference>
<dbReference type="Proteomes" id="UP000008841">
    <property type="component" value="Chromosome"/>
</dbReference>
<dbReference type="GO" id="GO:0004170">
    <property type="term" value="F:dUTP diphosphatase activity"/>
    <property type="evidence" value="ECO:0007669"/>
    <property type="project" value="UniProtKB-UniRule"/>
</dbReference>
<dbReference type="GO" id="GO:0000287">
    <property type="term" value="F:magnesium ion binding"/>
    <property type="evidence" value="ECO:0007669"/>
    <property type="project" value="UniProtKB-UniRule"/>
</dbReference>
<dbReference type="GO" id="GO:0006226">
    <property type="term" value="P:dUMP biosynthetic process"/>
    <property type="evidence" value="ECO:0007669"/>
    <property type="project" value="UniProtKB-UniRule"/>
</dbReference>
<dbReference type="GO" id="GO:0046081">
    <property type="term" value="P:dUTP catabolic process"/>
    <property type="evidence" value="ECO:0007669"/>
    <property type="project" value="InterPro"/>
</dbReference>
<dbReference type="CDD" id="cd07557">
    <property type="entry name" value="trimeric_dUTPase"/>
    <property type="match status" value="1"/>
</dbReference>
<dbReference type="FunFam" id="2.70.40.10:FF:000002">
    <property type="entry name" value="dUTP diphosphatase"/>
    <property type="match status" value="1"/>
</dbReference>
<dbReference type="Gene3D" id="2.70.40.10">
    <property type="match status" value="1"/>
</dbReference>
<dbReference type="HAMAP" id="MF_00116">
    <property type="entry name" value="dUTPase_bact"/>
    <property type="match status" value="1"/>
</dbReference>
<dbReference type="InterPro" id="IPR008181">
    <property type="entry name" value="dUTPase"/>
</dbReference>
<dbReference type="InterPro" id="IPR029054">
    <property type="entry name" value="dUTPase-like"/>
</dbReference>
<dbReference type="InterPro" id="IPR036157">
    <property type="entry name" value="dUTPase-like_sf"/>
</dbReference>
<dbReference type="InterPro" id="IPR033704">
    <property type="entry name" value="dUTPase_trimeric"/>
</dbReference>
<dbReference type="NCBIfam" id="TIGR00576">
    <property type="entry name" value="dut"/>
    <property type="match status" value="1"/>
</dbReference>
<dbReference type="NCBIfam" id="NF001862">
    <property type="entry name" value="PRK00601.1"/>
    <property type="match status" value="1"/>
</dbReference>
<dbReference type="PANTHER" id="PTHR11241">
    <property type="entry name" value="DEOXYURIDINE 5'-TRIPHOSPHATE NUCLEOTIDOHYDROLASE"/>
    <property type="match status" value="1"/>
</dbReference>
<dbReference type="PANTHER" id="PTHR11241:SF0">
    <property type="entry name" value="DEOXYURIDINE 5'-TRIPHOSPHATE NUCLEOTIDOHYDROLASE"/>
    <property type="match status" value="1"/>
</dbReference>
<dbReference type="Pfam" id="PF00692">
    <property type="entry name" value="dUTPase"/>
    <property type="match status" value="1"/>
</dbReference>
<dbReference type="SUPFAM" id="SSF51283">
    <property type="entry name" value="dUTPase-like"/>
    <property type="match status" value="1"/>
</dbReference>
<sequence length="153" mass="16640">MIKVKIVRVNKKAHLPVYATAHAAGMDVAACLDEPVMLEPFSTALIPSGFAIELPEGYEAQLRPRSGLALKHLISLPNSPATIDADYRGEVRVILVNFGKEPFSVAHGDRIAQMVVSRVERVDFDEAEELSMTQRGEGGFGHTGISAVHPRTH</sequence>
<name>DUT_CHLL2</name>